<keyword id="KW-0997">Cell inner membrane</keyword>
<keyword id="KW-1003">Cell membrane</keyword>
<keyword id="KW-0472">Membrane</keyword>
<keyword id="KW-0653">Protein transport</keyword>
<keyword id="KW-1185">Reference proteome</keyword>
<keyword id="KW-0811">Translocation</keyword>
<keyword id="KW-0812">Transmembrane</keyword>
<keyword id="KW-1133">Transmembrane helix</keyword>
<keyword id="KW-0813">Transport</keyword>
<evidence type="ECO:0000255" key="1">
    <source>
        <dbReference type="HAMAP-Rule" id="MF_00236"/>
    </source>
</evidence>
<evidence type="ECO:0000256" key="2">
    <source>
        <dbReference type="SAM" id="MobiDB-lite"/>
    </source>
</evidence>
<gene>
    <name evidence="1" type="primary">tatA</name>
    <name type="ordered locus">YPO3778</name>
    <name type="ordered locus">y0452</name>
    <name type="ordered locus">YP_3271</name>
</gene>
<feature type="chain" id="PRO_0000097970" description="Sec-independent protein translocase protein TatA">
    <location>
        <begin position="1"/>
        <end position="88"/>
    </location>
</feature>
<feature type="transmembrane region" description="Helical" evidence="1">
    <location>
        <begin position="1"/>
        <end position="21"/>
    </location>
</feature>
<feature type="region of interest" description="Disordered" evidence="2">
    <location>
        <begin position="41"/>
        <end position="88"/>
    </location>
</feature>
<feature type="compositionally biased region" description="Polar residues" evidence="2">
    <location>
        <begin position="46"/>
        <end position="56"/>
    </location>
</feature>
<feature type="compositionally biased region" description="Basic and acidic residues" evidence="2">
    <location>
        <begin position="76"/>
        <end position="88"/>
    </location>
</feature>
<comment type="function">
    <text evidence="1">Part of the twin-arginine translocation (Tat) system that transports large folded proteins containing a characteristic twin-arginine motif in their signal peptide across membranes. TatA could form the protein-conducting channel of the Tat system.</text>
</comment>
<comment type="subunit">
    <text evidence="1">The Tat system comprises two distinct complexes: a TatABC complex, containing multiple copies of TatA, TatB and TatC subunits, and a separate TatA complex, containing only TatA subunits. Substrates initially bind to the TatABC complex, which probably triggers association of the separate TatA complex to form the active translocon.</text>
</comment>
<comment type="subcellular location">
    <subcellularLocation>
        <location evidence="1">Cell inner membrane</location>
        <topology evidence="1">Single-pass membrane protein</topology>
    </subcellularLocation>
</comment>
<comment type="similarity">
    <text evidence="1">Belongs to the TatA/E family.</text>
</comment>
<accession>Q8ZAM2</accession>
<accession>Q0WAN3</accession>
<proteinExistence type="inferred from homology"/>
<organism>
    <name type="scientific">Yersinia pestis</name>
    <dbReference type="NCBI Taxonomy" id="632"/>
    <lineage>
        <taxon>Bacteria</taxon>
        <taxon>Pseudomonadati</taxon>
        <taxon>Pseudomonadota</taxon>
        <taxon>Gammaproteobacteria</taxon>
        <taxon>Enterobacterales</taxon>
        <taxon>Yersiniaceae</taxon>
        <taxon>Yersinia</taxon>
    </lineage>
</organism>
<dbReference type="EMBL" id="AL590842">
    <property type="protein sequence ID" value="CAL22364.1"/>
    <property type="molecule type" value="Genomic_DNA"/>
</dbReference>
<dbReference type="EMBL" id="AE009952">
    <property type="protein sequence ID" value="AAM84041.1"/>
    <property type="molecule type" value="Genomic_DNA"/>
</dbReference>
<dbReference type="EMBL" id="AE017042">
    <property type="protein sequence ID" value="AAS63439.1"/>
    <property type="molecule type" value="Genomic_DNA"/>
</dbReference>
<dbReference type="PIR" id="AI0459">
    <property type="entry name" value="AI0459"/>
</dbReference>
<dbReference type="RefSeq" id="WP_002211536.1">
    <property type="nucleotide sequence ID" value="NZ_WUCM01000048.1"/>
</dbReference>
<dbReference type="RefSeq" id="YP_002348655.1">
    <property type="nucleotide sequence ID" value="NC_003143.1"/>
</dbReference>
<dbReference type="SMR" id="Q8ZAM2"/>
<dbReference type="STRING" id="214092.YPO3778"/>
<dbReference type="PaxDb" id="214092-YPO3778"/>
<dbReference type="DNASU" id="1145399"/>
<dbReference type="EnsemblBacteria" id="AAS63439">
    <property type="protein sequence ID" value="AAS63439"/>
    <property type="gene ID" value="YP_3271"/>
</dbReference>
<dbReference type="KEGG" id="ype:YPO3778"/>
<dbReference type="KEGG" id="ypk:y0452"/>
<dbReference type="KEGG" id="ypm:YP_3271"/>
<dbReference type="PATRIC" id="fig|214092.21.peg.4300"/>
<dbReference type="eggNOG" id="COG1826">
    <property type="taxonomic scope" value="Bacteria"/>
</dbReference>
<dbReference type="HOGENOM" id="CLU_086034_5_1_6"/>
<dbReference type="OMA" id="KAMGDDQ"/>
<dbReference type="OrthoDB" id="7066617at2"/>
<dbReference type="PHI-base" id="PHI:9370"/>
<dbReference type="Proteomes" id="UP000000815">
    <property type="component" value="Chromosome"/>
</dbReference>
<dbReference type="Proteomes" id="UP000001019">
    <property type="component" value="Chromosome"/>
</dbReference>
<dbReference type="Proteomes" id="UP000002490">
    <property type="component" value="Chromosome"/>
</dbReference>
<dbReference type="GO" id="GO:0033281">
    <property type="term" value="C:TAT protein transport complex"/>
    <property type="evidence" value="ECO:0007669"/>
    <property type="project" value="UniProtKB-UniRule"/>
</dbReference>
<dbReference type="GO" id="GO:0008320">
    <property type="term" value="F:protein transmembrane transporter activity"/>
    <property type="evidence" value="ECO:0007669"/>
    <property type="project" value="UniProtKB-UniRule"/>
</dbReference>
<dbReference type="GO" id="GO:0043953">
    <property type="term" value="P:protein transport by the Tat complex"/>
    <property type="evidence" value="ECO:0007669"/>
    <property type="project" value="UniProtKB-UniRule"/>
</dbReference>
<dbReference type="Gene3D" id="1.20.5.3310">
    <property type="match status" value="1"/>
</dbReference>
<dbReference type="HAMAP" id="MF_00236">
    <property type="entry name" value="TatA_E"/>
    <property type="match status" value="1"/>
</dbReference>
<dbReference type="InterPro" id="IPR003369">
    <property type="entry name" value="TatA/B/E"/>
</dbReference>
<dbReference type="InterPro" id="IPR006312">
    <property type="entry name" value="TatA/E"/>
</dbReference>
<dbReference type="NCBIfam" id="TIGR01411">
    <property type="entry name" value="tatAE"/>
    <property type="match status" value="1"/>
</dbReference>
<dbReference type="PANTHER" id="PTHR42982">
    <property type="entry name" value="SEC-INDEPENDENT PROTEIN TRANSLOCASE PROTEIN TATA"/>
    <property type="match status" value="1"/>
</dbReference>
<dbReference type="PANTHER" id="PTHR42982:SF1">
    <property type="entry name" value="SEC-INDEPENDENT PROTEIN TRANSLOCASE PROTEIN TATA"/>
    <property type="match status" value="1"/>
</dbReference>
<dbReference type="Pfam" id="PF02416">
    <property type="entry name" value="TatA_B_E"/>
    <property type="match status" value="1"/>
</dbReference>
<reference key="1">
    <citation type="journal article" date="2001" name="Nature">
        <title>Genome sequence of Yersinia pestis, the causative agent of plague.</title>
        <authorList>
            <person name="Parkhill J."/>
            <person name="Wren B.W."/>
            <person name="Thomson N.R."/>
            <person name="Titball R.W."/>
            <person name="Holden M.T.G."/>
            <person name="Prentice M.B."/>
            <person name="Sebaihia M."/>
            <person name="James K.D."/>
            <person name="Churcher C.M."/>
            <person name="Mungall K.L."/>
            <person name="Baker S."/>
            <person name="Basham D."/>
            <person name="Bentley S.D."/>
            <person name="Brooks K."/>
            <person name="Cerdeno-Tarraga A.-M."/>
            <person name="Chillingworth T."/>
            <person name="Cronin A."/>
            <person name="Davies R.M."/>
            <person name="Davis P."/>
            <person name="Dougan G."/>
            <person name="Feltwell T."/>
            <person name="Hamlin N."/>
            <person name="Holroyd S."/>
            <person name="Jagels K."/>
            <person name="Karlyshev A.V."/>
            <person name="Leather S."/>
            <person name="Moule S."/>
            <person name="Oyston P.C.F."/>
            <person name="Quail M.A."/>
            <person name="Rutherford K.M."/>
            <person name="Simmonds M."/>
            <person name="Skelton J."/>
            <person name="Stevens K."/>
            <person name="Whitehead S."/>
            <person name="Barrell B.G."/>
        </authorList>
    </citation>
    <scope>NUCLEOTIDE SEQUENCE [LARGE SCALE GENOMIC DNA]</scope>
    <source>
        <strain>CO-92 / Biovar Orientalis</strain>
    </source>
</reference>
<reference key="2">
    <citation type="journal article" date="2002" name="J. Bacteriol.">
        <title>Genome sequence of Yersinia pestis KIM.</title>
        <authorList>
            <person name="Deng W."/>
            <person name="Burland V."/>
            <person name="Plunkett G. III"/>
            <person name="Boutin A."/>
            <person name="Mayhew G.F."/>
            <person name="Liss P."/>
            <person name="Perna N.T."/>
            <person name="Rose D.J."/>
            <person name="Mau B."/>
            <person name="Zhou S."/>
            <person name="Schwartz D.C."/>
            <person name="Fetherston J.D."/>
            <person name="Lindler L.E."/>
            <person name="Brubaker R.R."/>
            <person name="Plano G.V."/>
            <person name="Straley S.C."/>
            <person name="McDonough K.A."/>
            <person name="Nilles M.L."/>
            <person name="Matson J.S."/>
            <person name="Blattner F.R."/>
            <person name="Perry R.D."/>
        </authorList>
    </citation>
    <scope>NUCLEOTIDE SEQUENCE [LARGE SCALE GENOMIC DNA]</scope>
    <source>
        <strain>KIM10+ / Biovar Mediaevalis</strain>
    </source>
</reference>
<reference key="3">
    <citation type="journal article" date="2004" name="DNA Res.">
        <title>Complete genome sequence of Yersinia pestis strain 91001, an isolate avirulent to humans.</title>
        <authorList>
            <person name="Song Y."/>
            <person name="Tong Z."/>
            <person name="Wang J."/>
            <person name="Wang L."/>
            <person name="Guo Z."/>
            <person name="Han Y."/>
            <person name="Zhang J."/>
            <person name="Pei D."/>
            <person name="Zhou D."/>
            <person name="Qin H."/>
            <person name="Pang X."/>
            <person name="Han Y."/>
            <person name="Zhai J."/>
            <person name="Li M."/>
            <person name="Cui B."/>
            <person name="Qi Z."/>
            <person name="Jin L."/>
            <person name="Dai R."/>
            <person name="Chen F."/>
            <person name="Li S."/>
            <person name="Ye C."/>
            <person name="Du Z."/>
            <person name="Lin W."/>
            <person name="Wang J."/>
            <person name="Yu J."/>
            <person name="Yang H."/>
            <person name="Wang J."/>
            <person name="Huang P."/>
            <person name="Yang R."/>
        </authorList>
    </citation>
    <scope>NUCLEOTIDE SEQUENCE [LARGE SCALE GENOMIC DNA]</scope>
    <source>
        <strain>91001 / Biovar Mediaevalis</strain>
    </source>
</reference>
<protein>
    <recommendedName>
        <fullName evidence="1">Sec-independent protein translocase protein TatA</fullName>
    </recommendedName>
</protein>
<name>TATA_YERPE</name>
<sequence>MGSIGWAQLLIIAVIVVLLFGTNKLRTLGSDLGASIKGFKKAMGDDSQTPPTNVDKTSNDADFAKSITEKQQPVAKAEESKSHEKEQG</sequence>